<sequence length="98" mass="10938">MKTAIAERIEDKLYQNRYLVDAGRPHITVRPHRSPSLNLLALTRVCPAKCYELNETGQVEVTADGCMECGTCRVLCEANGDVEWSYPRGGFGVLFKFG</sequence>
<geneLocation type="plasmid">
    <name>pSymA</name>
    <name>megaplasmid 1</name>
</geneLocation>
<feature type="chain" id="PRO_0000159209" description="Ferredoxin-like protein">
    <location>
        <begin position="1"/>
        <end position="98"/>
    </location>
</feature>
<feature type="domain" description="4Fe-4S ferredoxin-type" evidence="1">
    <location>
        <begin position="57"/>
        <end position="87"/>
    </location>
</feature>
<feature type="sequence conflict" description="In Ref. 2; AAA26282." evidence="2" ref="2">
    <original>T</original>
    <variation>I</variation>
    <location>
        <position position="62"/>
    </location>
</feature>
<feature type="sequence conflict" description="In Ref. 2; AAA26282." evidence="2" ref="2">
    <original>F</original>
    <variation>S</variation>
    <location>
        <position position="97"/>
    </location>
</feature>
<dbReference type="EMBL" id="M15546">
    <property type="protein sequence ID" value="AAA21771.1"/>
    <property type="molecule type" value="Genomic_DNA"/>
</dbReference>
<dbReference type="EMBL" id="M15787">
    <property type="protein sequence ID" value="AAA26282.1"/>
    <property type="molecule type" value="Genomic_DNA"/>
</dbReference>
<dbReference type="EMBL" id="AE006469">
    <property type="protein sequence ID" value="AAK65102.1"/>
    <property type="molecule type" value="Genomic_DNA"/>
</dbReference>
<dbReference type="PIR" id="D26952">
    <property type="entry name" value="FERMX"/>
</dbReference>
<dbReference type="PIR" id="D95317">
    <property type="entry name" value="D95317"/>
</dbReference>
<dbReference type="RefSeq" id="NP_435690.1">
    <property type="nucleotide sequence ID" value="NC_003037.1"/>
</dbReference>
<dbReference type="RefSeq" id="WP_010967432.1">
    <property type="nucleotide sequence ID" value="NC_003037.1"/>
</dbReference>
<dbReference type="SMR" id="P09822"/>
<dbReference type="EnsemblBacteria" id="AAK65102">
    <property type="protein sequence ID" value="AAK65102"/>
    <property type="gene ID" value="SMa0816"/>
</dbReference>
<dbReference type="KEGG" id="sme:SMa0816"/>
<dbReference type="PATRIC" id="fig|266834.11.peg.457"/>
<dbReference type="HOGENOM" id="CLU_163428_0_0_5"/>
<dbReference type="OrthoDB" id="9800260at2"/>
<dbReference type="Proteomes" id="UP000001976">
    <property type="component" value="Plasmid pSymA"/>
</dbReference>
<dbReference type="GO" id="GO:0005506">
    <property type="term" value="F:iron ion binding"/>
    <property type="evidence" value="ECO:0007669"/>
    <property type="project" value="InterPro"/>
</dbReference>
<dbReference type="GO" id="GO:0051536">
    <property type="term" value="F:iron-sulfur cluster binding"/>
    <property type="evidence" value="ECO:0007669"/>
    <property type="project" value="UniProtKB-KW"/>
</dbReference>
<dbReference type="GO" id="GO:0009399">
    <property type="term" value="P:nitrogen fixation"/>
    <property type="evidence" value="ECO:0007669"/>
    <property type="project" value="UniProtKB-KW"/>
</dbReference>
<dbReference type="Gene3D" id="3.30.70.20">
    <property type="match status" value="1"/>
</dbReference>
<dbReference type="InterPro" id="IPR017896">
    <property type="entry name" value="4Fe4S_Fe-S-bd"/>
</dbReference>
<dbReference type="InterPro" id="IPR017900">
    <property type="entry name" value="4Fe4S_Fe_S_CS"/>
</dbReference>
<dbReference type="InterPro" id="IPR007859">
    <property type="entry name" value="ETF-QO/FixX_C"/>
</dbReference>
<dbReference type="InterPro" id="IPR012206">
    <property type="entry name" value="Fd_FixX"/>
</dbReference>
<dbReference type="PANTHER" id="PTHR43082">
    <property type="entry name" value="FERREDOXIN-LIKE"/>
    <property type="match status" value="1"/>
</dbReference>
<dbReference type="PANTHER" id="PTHR43082:SF3">
    <property type="entry name" value="FERREDOXIN-LIKE PROTEIN YDIT"/>
    <property type="match status" value="1"/>
</dbReference>
<dbReference type="Pfam" id="PF05187">
    <property type="entry name" value="Fer4_ETF_QO"/>
    <property type="match status" value="1"/>
</dbReference>
<dbReference type="PIRSF" id="PIRSF036548">
    <property type="entry name" value="Fdx_FixX"/>
    <property type="match status" value="1"/>
</dbReference>
<dbReference type="SUPFAM" id="SSF54862">
    <property type="entry name" value="4Fe-4S ferredoxins"/>
    <property type="match status" value="1"/>
</dbReference>
<dbReference type="PROSITE" id="PS00198">
    <property type="entry name" value="4FE4S_FER_1"/>
    <property type="match status" value="1"/>
</dbReference>
<dbReference type="PROSITE" id="PS51379">
    <property type="entry name" value="4FE4S_FER_2"/>
    <property type="match status" value="1"/>
</dbReference>
<protein>
    <recommendedName>
        <fullName>Ferredoxin-like protein</fullName>
    </recommendedName>
</protein>
<name>FIXX_RHIME</name>
<keyword id="KW-0249">Electron transport</keyword>
<keyword id="KW-0408">Iron</keyword>
<keyword id="KW-0411">Iron-sulfur</keyword>
<keyword id="KW-0479">Metal-binding</keyword>
<keyword id="KW-0535">Nitrogen fixation</keyword>
<keyword id="KW-0614">Plasmid</keyword>
<keyword id="KW-1185">Reference proteome</keyword>
<keyword id="KW-0813">Transport</keyword>
<reference key="1">
    <citation type="journal article" date="1987" name="J. Bacteriol.">
        <title>Genetic and structural analysis of the Rhizobium meliloti fixA, fixB, fixC, and fixX genes.</title>
        <authorList>
            <person name="Earl C.D."/>
            <person name="Ronson C.W."/>
            <person name="Ausubel F.M."/>
        </authorList>
    </citation>
    <scope>NUCLEOTIDE SEQUENCE [GENOMIC DNA]</scope>
    <source>
        <strain>1021</strain>
    </source>
</reference>
<reference key="2">
    <citation type="journal article" date="1987" name="J. Bacteriol.">
        <title>Rhizobium meliloti insertion element ISRm2 and its use for identification of the fixX gene.</title>
        <authorList>
            <person name="Dusha I."/>
            <person name="Kovalenko S."/>
            <person name="Banfalvi Z."/>
            <person name="Kondorosi A."/>
        </authorList>
    </citation>
    <scope>NUCLEOTIDE SEQUENCE [GENOMIC DNA]</scope>
</reference>
<reference key="3">
    <citation type="journal article" date="2001" name="Proc. Natl. Acad. Sci. U.S.A.">
        <title>Nucleotide sequence and predicted functions of the entire Sinorhizobium meliloti pSymA megaplasmid.</title>
        <authorList>
            <person name="Barnett M.J."/>
            <person name="Fisher R.F."/>
            <person name="Jones T."/>
            <person name="Komp C."/>
            <person name="Abola A.P."/>
            <person name="Barloy-Hubler F."/>
            <person name="Bowser L."/>
            <person name="Capela D."/>
            <person name="Galibert F."/>
            <person name="Gouzy J."/>
            <person name="Gurjal M."/>
            <person name="Hong A."/>
            <person name="Huizar L."/>
            <person name="Hyman R.W."/>
            <person name="Kahn D."/>
            <person name="Kahn M.L."/>
            <person name="Kalman S."/>
            <person name="Keating D.H."/>
            <person name="Palm C."/>
            <person name="Peck M.C."/>
            <person name="Surzycki R."/>
            <person name="Wells D.H."/>
            <person name="Yeh K.-C."/>
            <person name="Davis R.W."/>
            <person name="Federspiel N.A."/>
            <person name="Long S.R."/>
        </authorList>
    </citation>
    <scope>NUCLEOTIDE SEQUENCE [LARGE SCALE GENOMIC DNA]</scope>
    <source>
        <strain>1021</strain>
    </source>
</reference>
<reference key="4">
    <citation type="journal article" date="2001" name="Science">
        <title>The composite genome of the legume symbiont Sinorhizobium meliloti.</title>
        <authorList>
            <person name="Galibert F."/>
            <person name="Finan T.M."/>
            <person name="Long S.R."/>
            <person name="Puehler A."/>
            <person name="Abola P."/>
            <person name="Ampe F."/>
            <person name="Barloy-Hubler F."/>
            <person name="Barnett M.J."/>
            <person name="Becker A."/>
            <person name="Boistard P."/>
            <person name="Bothe G."/>
            <person name="Boutry M."/>
            <person name="Bowser L."/>
            <person name="Buhrmester J."/>
            <person name="Cadieu E."/>
            <person name="Capela D."/>
            <person name="Chain P."/>
            <person name="Cowie A."/>
            <person name="Davis R.W."/>
            <person name="Dreano S."/>
            <person name="Federspiel N.A."/>
            <person name="Fisher R.F."/>
            <person name="Gloux S."/>
            <person name="Godrie T."/>
            <person name="Goffeau A."/>
            <person name="Golding B."/>
            <person name="Gouzy J."/>
            <person name="Gurjal M."/>
            <person name="Hernandez-Lucas I."/>
            <person name="Hong A."/>
            <person name="Huizar L."/>
            <person name="Hyman R.W."/>
            <person name="Jones T."/>
            <person name="Kahn D."/>
            <person name="Kahn M.L."/>
            <person name="Kalman S."/>
            <person name="Keating D.H."/>
            <person name="Kiss E."/>
            <person name="Komp C."/>
            <person name="Lelaure V."/>
            <person name="Masuy D."/>
            <person name="Palm C."/>
            <person name="Peck M.C."/>
            <person name="Pohl T.M."/>
            <person name="Portetelle D."/>
            <person name="Purnelle B."/>
            <person name="Ramsperger U."/>
            <person name="Surzycki R."/>
            <person name="Thebault P."/>
            <person name="Vandenbol M."/>
            <person name="Vorhoelter F.J."/>
            <person name="Weidner S."/>
            <person name="Wells D.H."/>
            <person name="Wong K."/>
            <person name="Yeh K.-C."/>
            <person name="Batut J."/>
        </authorList>
    </citation>
    <scope>NUCLEOTIDE SEQUENCE [LARGE SCALE GENOMIC DNA]</scope>
    <source>
        <strain>1021</strain>
    </source>
</reference>
<accession>P09822</accession>
<gene>
    <name type="primary">fixX</name>
    <name type="ordered locus">RA0444</name>
    <name type="ORF">SMa0816</name>
</gene>
<comment type="function">
    <text>Could be a 3Fe-4S cluster-containing protein.</text>
</comment>
<comment type="similarity">
    <text evidence="2">To ferredoxins from P.putida and C.tartarivorum, ferredoxin I from A.vinelandii, ferredoxin II from D.desulfuricans.</text>
</comment>
<organism>
    <name type="scientific">Rhizobium meliloti (strain 1021)</name>
    <name type="common">Ensifer meliloti</name>
    <name type="synonym">Sinorhizobium meliloti</name>
    <dbReference type="NCBI Taxonomy" id="266834"/>
    <lineage>
        <taxon>Bacteria</taxon>
        <taxon>Pseudomonadati</taxon>
        <taxon>Pseudomonadota</taxon>
        <taxon>Alphaproteobacteria</taxon>
        <taxon>Hyphomicrobiales</taxon>
        <taxon>Rhizobiaceae</taxon>
        <taxon>Sinorhizobium/Ensifer group</taxon>
        <taxon>Sinorhizobium</taxon>
    </lineage>
</organism>
<proteinExistence type="predicted"/>
<evidence type="ECO:0000255" key="1">
    <source>
        <dbReference type="PROSITE-ProRule" id="PRU00711"/>
    </source>
</evidence>
<evidence type="ECO:0000305" key="2"/>